<keyword id="KW-0325">Glycoprotein</keyword>
<keyword id="KW-1185">Reference proteome</keyword>
<keyword id="KW-0691">RNA editing</keyword>
<keyword id="KW-0964">Secreted</keyword>
<keyword id="KW-0732">Signal</keyword>
<protein>
    <recommendedName>
        <fullName>Uncharacterized protein CG3556</fullName>
    </recommendedName>
</protein>
<comment type="subcellular location">
    <subcellularLocation>
        <location evidence="6">Secreted</location>
    </subcellularLocation>
</comment>
<comment type="RNA editing">
    <location>
        <position position="572" evidence="4 5"/>
    </location>
    <text evidence="4">Partially edited. Target of Adar.</text>
</comment>
<accession>Q9W4K2</accession>
<accession>B5RJ69</accession>
<accession>Q8T0N7</accession>
<proteinExistence type="evidence at transcript level"/>
<dbReference type="EMBL" id="AE014298">
    <property type="protein sequence ID" value="AAF45949.1"/>
    <property type="molecule type" value="Genomic_DNA"/>
</dbReference>
<dbReference type="EMBL" id="AY069152">
    <property type="protein sequence ID" value="AAL39297.1"/>
    <property type="molecule type" value="mRNA"/>
</dbReference>
<dbReference type="EMBL" id="BT044343">
    <property type="protein sequence ID" value="ACH92408.1"/>
    <property type="molecule type" value="mRNA"/>
</dbReference>
<dbReference type="RefSeq" id="NP_001245529.1">
    <property type="nucleotide sequence ID" value="NM_001258600.2"/>
</dbReference>
<dbReference type="RefSeq" id="NP_572164.2">
    <property type="nucleotide sequence ID" value="NM_131936.3"/>
</dbReference>
<dbReference type="SMR" id="Q9W4K2"/>
<dbReference type="BioGRID" id="57897">
    <property type="interactions" value="1"/>
</dbReference>
<dbReference type="FunCoup" id="Q9W4K2">
    <property type="interactions" value="110"/>
</dbReference>
<dbReference type="STRING" id="7227.FBpp0301042"/>
<dbReference type="GlyGen" id="Q9W4K2">
    <property type="glycosylation" value="11 sites"/>
</dbReference>
<dbReference type="PaxDb" id="7227-FBpp0301042"/>
<dbReference type="DNASU" id="31380"/>
<dbReference type="EnsemblMetazoa" id="FBtr0070674">
    <property type="protein sequence ID" value="FBpp0070642"/>
    <property type="gene ID" value="FBgn0029708"/>
</dbReference>
<dbReference type="EnsemblMetazoa" id="FBtr0308916">
    <property type="protein sequence ID" value="FBpp0301042"/>
    <property type="gene ID" value="FBgn0029708"/>
</dbReference>
<dbReference type="GeneID" id="31380"/>
<dbReference type="KEGG" id="dme:Dmel_CG3556"/>
<dbReference type="UCSC" id="CG3556-RA">
    <property type="organism name" value="d. melanogaster"/>
</dbReference>
<dbReference type="AGR" id="FB:FBgn0029708"/>
<dbReference type="FlyBase" id="FBgn0029708">
    <property type="gene designation" value="CG3556"/>
</dbReference>
<dbReference type="VEuPathDB" id="VectorBase:FBgn0029708"/>
<dbReference type="eggNOG" id="ENOG502QQHG">
    <property type="taxonomic scope" value="Eukaryota"/>
</dbReference>
<dbReference type="GeneTree" id="ENSGT00530000063370"/>
<dbReference type="HOGENOM" id="CLU_032349_0_0_1"/>
<dbReference type="InParanoid" id="Q9W4K2"/>
<dbReference type="OMA" id="NEEPRGY"/>
<dbReference type="OrthoDB" id="6343110at2759"/>
<dbReference type="PhylomeDB" id="Q9W4K2"/>
<dbReference type="Reactome" id="R-DME-6798695">
    <property type="pathway name" value="Neutrophil degranulation"/>
</dbReference>
<dbReference type="Reactome" id="R-DME-9758881">
    <property type="pathway name" value="Uptake of dietary cobalamins into enterocytes"/>
</dbReference>
<dbReference type="Reactome" id="R-DME-9758890">
    <property type="pathway name" value="Transport of RCbl within the body"/>
</dbReference>
<dbReference type="BioGRID-ORCS" id="31380">
    <property type="hits" value="0 hits in 1 CRISPR screen"/>
</dbReference>
<dbReference type="GenomeRNAi" id="31380"/>
<dbReference type="PRO" id="PR:Q9W4K2"/>
<dbReference type="Proteomes" id="UP000000803">
    <property type="component" value="Chromosome X"/>
</dbReference>
<dbReference type="Bgee" id="FBgn0029708">
    <property type="expression patterns" value="Expressed in mechanosensory neuron (Drosophila) in haltere and 167 other cell types or tissues"/>
</dbReference>
<dbReference type="ExpressionAtlas" id="Q9W4K2">
    <property type="expression patterns" value="baseline and differential"/>
</dbReference>
<dbReference type="GO" id="GO:0005615">
    <property type="term" value="C:extracellular space"/>
    <property type="evidence" value="ECO:0000318"/>
    <property type="project" value="GO_Central"/>
</dbReference>
<dbReference type="GO" id="GO:0031419">
    <property type="term" value="F:cobalamin binding"/>
    <property type="evidence" value="ECO:0000318"/>
    <property type="project" value="GO_Central"/>
</dbReference>
<dbReference type="GO" id="GO:0015889">
    <property type="term" value="P:cobalamin transport"/>
    <property type="evidence" value="ECO:0000318"/>
    <property type="project" value="GO_Central"/>
</dbReference>
<dbReference type="Gene3D" id="1.50.10.20">
    <property type="match status" value="1"/>
</dbReference>
<dbReference type="Gene3D" id="2.170.130.30">
    <property type="match status" value="1"/>
</dbReference>
<dbReference type="InterPro" id="IPR002157">
    <property type="entry name" value="Cbl-bd_prot"/>
</dbReference>
<dbReference type="InterPro" id="IPR051588">
    <property type="entry name" value="Cobalamin_Transport"/>
</dbReference>
<dbReference type="InterPro" id="IPR008930">
    <property type="entry name" value="Terpenoid_cyclase/PrenylTrfase"/>
</dbReference>
<dbReference type="PANTHER" id="PTHR10559:SF18">
    <property type="entry name" value="TRANSCOBALAMIN II"/>
    <property type="match status" value="1"/>
</dbReference>
<dbReference type="PANTHER" id="PTHR10559">
    <property type="entry name" value="TRANSCOBALAMIN-1/GASTRIC INTRINSIC FACTOR"/>
    <property type="match status" value="1"/>
</dbReference>
<dbReference type="Pfam" id="PF01122">
    <property type="entry name" value="Cobalamin_bind"/>
    <property type="match status" value="1"/>
</dbReference>
<dbReference type="SUPFAM" id="SSF48239">
    <property type="entry name" value="Terpenoid cyclases/Protein prenyltransferases"/>
    <property type="match status" value="1"/>
</dbReference>
<reference evidence="7" key="1">
    <citation type="journal article" date="2000" name="Science">
        <title>The genome sequence of Drosophila melanogaster.</title>
        <authorList>
            <person name="Adams M.D."/>
            <person name="Celniker S.E."/>
            <person name="Holt R.A."/>
            <person name="Evans C.A."/>
            <person name="Gocayne J.D."/>
            <person name="Amanatides P.G."/>
            <person name="Scherer S.E."/>
            <person name="Li P.W."/>
            <person name="Hoskins R.A."/>
            <person name="Galle R.F."/>
            <person name="George R.A."/>
            <person name="Lewis S.E."/>
            <person name="Richards S."/>
            <person name="Ashburner M."/>
            <person name="Henderson S.N."/>
            <person name="Sutton G.G."/>
            <person name="Wortman J.R."/>
            <person name="Yandell M.D."/>
            <person name="Zhang Q."/>
            <person name="Chen L.X."/>
            <person name="Brandon R.C."/>
            <person name="Rogers Y.-H.C."/>
            <person name="Blazej R.G."/>
            <person name="Champe M."/>
            <person name="Pfeiffer B.D."/>
            <person name="Wan K.H."/>
            <person name="Doyle C."/>
            <person name="Baxter E.G."/>
            <person name="Helt G."/>
            <person name="Nelson C.R."/>
            <person name="Miklos G.L.G."/>
            <person name="Abril J.F."/>
            <person name="Agbayani A."/>
            <person name="An H.-J."/>
            <person name="Andrews-Pfannkoch C."/>
            <person name="Baldwin D."/>
            <person name="Ballew R.M."/>
            <person name="Basu A."/>
            <person name="Baxendale J."/>
            <person name="Bayraktaroglu L."/>
            <person name="Beasley E.M."/>
            <person name="Beeson K.Y."/>
            <person name="Benos P.V."/>
            <person name="Berman B.P."/>
            <person name="Bhandari D."/>
            <person name="Bolshakov S."/>
            <person name="Borkova D."/>
            <person name="Botchan M.R."/>
            <person name="Bouck J."/>
            <person name="Brokstein P."/>
            <person name="Brottier P."/>
            <person name="Burtis K.C."/>
            <person name="Busam D.A."/>
            <person name="Butler H."/>
            <person name="Cadieu E."/>
            <person name="Center A."/>
            <person name="Chandra I."/>
            <person name="Cherry J.M."/>
            <person name="Cawley S."/>
            <person name="Dahlke C."/>
            <person name="Davenport L.B."/>
            <person name="Davies P."/>
            <person name="de Pablos B."/>
            <person name="Delcher A."/>
            <person name="Deng Z."/>
            <person name="Mays A.D."/>
            <person name="Dew I."/>
            <person name="Dietz S.M."/>
            <person name="Dodson K."/>
            <person name="Doup L.E."/>
            <person name="Downes M."/>
            <person name="Dugan-Rocha S."/>
            <person name="Dunkov B.C."/>
            <person name="Dunn P."/>
            <person name="Durbin K.J."/>
            <person name="Evangelista C.C."/>
            <person name="Ferraz C."/>
            <person name="Ferriera S."/>
            <person name="Fleischmann W."/>
            <person name="Fosler C."/>
            <person name="Gabrielian A.E."/>
            <person name="Garg N.S."/>
            <person name="Gelbart W.M."/>
            <person name="Glasser K."/>
            <person name="Glodek A."/>
            <person name="Gong F."/>
            <person name="Gorrell J.H."/>
            <person name="Gu Z."/>
            <person name="Guan P."/>
            <person name="Harris M."/>
            <person name="Harris N.L."/>
            <person name="Harvey D.A."/>
            <person name="Heiman T.J."/>
            <person name="Hernandez J.R."/>
            <person name="Houck J."/>
            <person name="Hostin D."/>
            <person name="Houston K.A."/>
            <person name="Howland T.J."/>
            <person name="Wei M.-H."/>
            <person name="Ibegwam C."/>
            <person name="Jalali M."/>
            <person name="Kalush F."/>
            <person name="Karpen G.H."/>
            <person name="Ke Z."/>
            <person name="Kennison J.A."/>
            <person name="Ketchum K.A."/>
            <person name="Kimmel B.E."/>
            <person name="Kodira C.D."/>
            <person name="Kraft C.L."/>
            <person name="Kravitz S."/>
            <person name="Kulp D."/>
            <person name="Lai Z."/>
            <person name="Lasko P."/>
            <person name="Lei Y."/>
            <person name="Levitsky A.A."/>
            <person name="Li J.H."/>
            <person name="Li Z."/>
            <person name="Liang Y."/>
            <person name="Lin X."/>
            <person name="Liu X."/>
            <person name="Mattei B."/>
            <person name="McIntosh T.C."/>
            <person name="McLeod M.P."/>
            <person name="McPherson D."/>
            <person name="Merkulov G."/>
            <person name="Milshina N.V."/>
            <person name="Mobarry C."/>
            <person name="Morris J."/>
            <person name="Moshrefi A."/>
            <person name="Mount S.M."/>
            <person name="Moy M."/>
            <person name="Murphy B."/>
            <person name="Murphy L."/>
            <person name="Muzny D.M."/>
            <person name="Nelson D.L."/>
            <person name="Nelson D.R."/>
            <person name="Nelson K.A."/>
            <person name="Nixon K."/>
            <person name="Nusskern D.R."/>
            <person name="Pacleb J.M."/>
            <person name="Palazzolo M."/>
            <person name="Pittman G.S."/>
            <person name="Pan S."/>
            <person name="Pollard J."/>
            <person name="Puri V."/>
            <person name="Reese M.G."/>
            <person name="Reinert K."/>
            <person name="Remington K."/>
            <person name="Saunders R.D.C."/>
            <person name="Scheeler F."/>
            <person name="Shen H."/>
            <person name="Shue B.C."/>
            <person name="Siden-Kiamos I."/>
            <person name="Simpson M."/>
            <person name="Skupski M.P."/>
            <person name="Smith T.J."/>
            <person name="Spier E."/>
            <person name="Spradling A.C."/>
            <person name="Stapleton M."/>
            <person name="Strong R."/>
            <person name="Sun E."/>
            <person name="Svirskas R."/>
            <person name="Tector C."/>
            <person name="Turner R."/>
            <person name="Venter E."/>
            <person name="Wang A.H."/>
            <person name="Wang X."/>
            <person name="Wang Z.-Y."/>
            <person name="Wassarman D.A."/>
            <person name="Weinstock G.M."/>
            <person name="Weissenbach J."/>
            <person name="Williams S.M."/>
            <person name="Woodage T."/>
            <person name="Worley K.C."/>
            <person name="Wu D."/>
            <person name="Yang S."/>
            <person name="Yao Q.A."/>
            <person name="Ye J."/>
            <person name="Yeh R.-F."/>
            <person name="Zaveri J.S."/>
            <person name="Zhan M."/>
            <person name="Zhang G."/>
            <person name="Zhao Q."/>
            <person name="Zheng L."/>
            <person name="Zheng X.H."/>
            <person name="Zhong F.N."/>
            <person name="Zhong W."/>
            <person name="Zhou X."/>
            <person name="Zhu S.C."/>
            <person name="Zhu X."/>
            <person name="Smith H.O."/>
            <person name="Gibbs R.A."/>
            <person name="Myers E.W."/>
            <person name="Rubin G.M."/>
            <person name="Venter J.C."/>
        </authorList>
    </citation>
    <scope>NUCLEOTIDE SEQUENCE [LARGE SCALE GENOMIC DNA]</scope>
    <source>
        <strain evidence="3">Berkeley</strain>
    </source>
</reference>
<reference evidence="6 7" key="2">
    <citation type="journal article" date="2002" name="Genome Biol.">
        <title>Annotation of the Drosophila melanogaster euchromatic genome: a systematic review.</title>
        <authorList>
            <person name="Misra S."/>
            <person name="Crosby M.A."/>
            <person name="Mungall C.J."/>
            <person name="Matthews B.B."/>
            <person name="Campbell K.S."/>
            <person name="Hradecky P."/>
            <person name="Huang Y."/>
            <person name="Kaminker J.S."/>
            <person name="Millburn G.H."/>
            <person name="Prochnik S.E."/>
            <person name="Smith C.D."/>
            <person name="Tupy J.L."/>
            <person name="Whitfield E.J."/>
            <person name="Bayraktaroglu L."/>
            <person name="Berman B.P."/>
            <person name="Bettencourt B.R."/>
            <person name="Celniker S.E."/>
            <person name="de Grey A.D.N.J."/>
            <person name="Drysdale R.A."/>
            <person name="Harris N.L."/>
            <person name="Richter J."/>
            <person name="Russo S."/>
            <person name="Schroeder A.J."/>
            <person name="Shu S.Q."/>
            <person name="Stapleton M."/>
            <person name="Yamada C."/>
            <person name="Ashburner M."/>
            <person name="Gelbart W.M."/>
            <person name="Rubin G.M."/>
            <person name="Lewis S.E."/>
        </authorList>
    </citation>
    <scope>GENOME REANNOTATION</scope>
    <source>
        <strain>Berkeley</strain>
    </source>
</reference>
<reference evidence="6 8" key="3">
    <citation type="submission" date="2008-09" db="EMBL/GenBank/DDBJ databases">
        <authorList>
            <person name="Stapleton M."/>
            <person name="Brokstein P."/>
            <person name="Hong L."/>
            <person name="Agbayani A."/>
            <person name="Carlson J.W."/>
            <person name="Champe M."/>
            <person name="Booth B."/>
            <person name="Chavez C."/>
            <person name="Dorsett V."/>
            <person name="Dresnek D."/>
            <person name="Farfan D."/>
            <person name="Frise E."/>
            <person name="George R.A."/>
            <person name="Gonzalez M."/>
            <person name="Guarin H."/>
            <person name="Kronmiller B."/>
            <person name="Li P.W."/>
            <person name="Liao G."/>
            <person name="Miranda A."/>
            <person name="Mungall C.J."/>
            <person name="Nunoo J."/>
            <person name="Pacleb J.M."/>
            <person name="Paragas V."/>
            <person name="Park S."/>
            <person name="Patel S."/>
            <person name="Phouanenavong S."/>
            <person name="Wan K.H."/>
            <person name="Yu C."/>
            <person name="Lewis S.E."/>
            <person name="Rubin G.M."/>
        </authorList>
    </citation>
    <scope>NUCLEOTIDE SEQUENCE [LARGE SCALE MRNA]</scope>
    <scope>RNA EDITING OF POSITION 572</scope>
    <source>
        <strain evidence="8">Berkeley</strain>
        <tissue>Head</tissue>
    </source>
</reference>
<reference evidence="6" key="4">
    <citation type="journal article" date="2006" name="RNA">
        <title>RNA editing in Drosophila melanogaster: new targets and functional consequences.</title>
        <authorList>
            <person name="Stapleton M."/>
            <person name="Carlson J.W."/>
            <person name="Celniker S.E."/>
        </authorList>
    </citation>
    <scope>RNA EDITING OF POSITION 572</scope>
</reference>
<feature type="signal peptide" evidence="1">
    <location>
        <begin position="1"/>
        <end position="23"/>
    </location>
</feature>
<feature type="chain" id="PRO_0000337157" description="Uncharacterized protein CG3556" evidence="1">
    <location>
        <begin position="24"/>
        <end position="595"/>
    </location>
</feature>
<feature type="region of interest" description="Disordered" evidence="2">
    <location>
        <begin position="61"/>
        <end position="119"/>
    </location>
</feature>
<feature type="region of interest" description="Disordered" evidence="2">
    <location>
        <begin position="141"/>
        <end position="164"/>
    </location>
</feature>
<feature type="compositionally biased region" description="Polar residues" evidence="2">
    <location>
        <begin position="61"/>
        <end position="83"/>
    </location>
</feature>
<feature type="compositionally biased region" description="Low complexity" evidence="2">
    <location>
        <begin position="84"/>
        <end position="119"/>
    </location>
</feature>
<feature type="glycosylation site" description="N-linked (GlcNAc...) asparagine" evidence="1">
    <location>
        <position position="31"/>
    </location>
</feature>
<feature type="glycosylation site" description="N-linked (GlcNAc...) asparagine" evidence="1">
    <location>
        <position position="63"/>
    </location>
</feature>
<feature type="glycosylation site" description="N-linked (GlcNAc...) asparagine" evidence="1">
    <location>
        <position position="88"/>
    </location>
</feature>
<feature type="glycosylation site" description="N-linked (GlcNAc...) asparagine" evidence="1">
    <location>
        <position position="112"/>
    </location>
</feature>
<feature type="glycosylation site" description="N-linked (GlcNAc...) asparagine" evidence="1">
    <location>
        <position position="144"/>
    </location>
</feature>
<feature type="glycosylation site" description="N-linked (GlcNAc...) asparagine" evidence="1">
    <location>
        <position position="187"/>
    </location>
</feature>
<feature type="glycosylation site" description="N-linked (GlcNAc...) asparagine" evidence="1">
    <location>
        <position position="205"/>
    </location>
</feature>
<feature type="glycosylation site" description="N-linked (GlcNAc...) asparagine" evidence="1">
    <location>
        <position position="389"/>
    </location>
</feature>
<feature type="glycosylation site" description="N-linked (GlcNAc...) asparagine" evidence="1">
    <location>
        <position position="480"/>
    </location>
</feature>
<feature type="glycosylation site" description="N-linked (GlcNAc...) asparagine" evidence="1">
    <location>
        <position position="492"/>
    </location>
</feature>
<feature type="glycosylation site" description="N-linked (GlcNAc...) asparagine" evidence="1">
    <location>
        <position position="506"/>
    </location>
</feature>
<feature type="sequence variant" description="In RNA edited version." evidence="4">
    <original>I</original>
    <variation>V</variation>
    <location>
        <position position="572"/>
    </location>
</feature>
<gene>
    <name type="ORF">CG3556</name>
</gene>
<name>Y3556_DROME</name>
<sequence length="595" mass="65084">MLSLSSPPWLLLLVLFFFANGSATVVSLAENVTLATLPSTSPISVSFSTTSSVVAPISTELENQTASSSNLNTNNEASDEQTGNSNSNTSSHSRNINGLPSSNSNIDNANSNSSSVSSLSTTTSAISGVDQQESLILATPTALNGSGTPPEHQTIGQAPPTKGEQEAILRALDWLKEKRASDYGWGNDTHVVILAKELSGGRDPNDSVDGHVQVIQELEDTLSVKEMEIEILAMLDRHHTLPKPLDLDKLARYVLALGSLCKDPKHFHGHDLVATLQHHEPAQDIEFALTTLSACSSAAHVRKRQIRRLLDIASGVTDQSVDAIAMVILALRCIVTDHRHRHLQHFVRRPARGLATLQDQRGSFGSLRSTALAMQALQDLEYDPAGHWNRTAASRYILSRQRADGGWSEEPLQDGQEPDIGVGLTADIILALGWKGLGAVRALQCDHVIRESSDPTENGEPKLAVPFGLSSSAEESDAKNISYTYTLWVGSNVTESFSLSLVSPKNTSFFKAMTQAAEMDPRFIFEAREWPNGHYVHTLYGKKEEPRGYHYWLLYRLPELPDPNNTPGNQLIAPVGVDELMVEDGEHYLYWYKKL</sequence>
<evidence type="ECO:0000255" key="1"/>
<evidence type="ECO:0000256" key="2">
    <source>
        <dbReference type="SAM" id="MobiDB-lite"/>
    </source>
</evidence>
<evidence type="ECO:0000269" key="3">
    <source>
    </source>
</evidence>
<evidence type="ECO:0000269" key="4">
    <source>
    </source>
</evidence>
<evidence type="ECO:0000269" key="5">
    <source ref="3"/>
</evidence>
<evidence type="ECO:0000305" key="6"/>
<evidence type="ECO:0000312" key="7">
    <source>
        <dbReference type="EMBL" id="AAF45949.1"/>
    </source>
</evidence>
<evidence type="ECO:0000312" key="8">
    <source>
        <dbReference type="EMBL" id="AAL39297.1"/>
    </source>
</evidence>
<organism>
    <name type="scientific">Drosophila melanogaster</name>
    <name type="common">Fruit fly</name>
    <dbReference type="NCBI Taxonomy" id="7227"/>
    <lineage>
        <taxon>Eukaryota</taxon>
        <taxon>Metazoa</taxon>
        <taxon>Ecdysozoa</taxon>
        <taxon>Arthropoda</taxon>
        <taxon>Hexapoda</taxon>
        <taxon>Insecta</taxon>
        <taxon>Pterygota</taxon>
        <taxon>Neoptera</taxon>
        <taxon>Endopterygota</taxon>
        <taxon>Diptera</taxon>
        <taxon>Brachycera</taxon>
        <taxon>Muscomorpha</taxon>
        <taxon>Ephydroidea</taxon>
        <taxon>Drosophilidae</taxon>
        <taxon>Drosophila</taxon>
        <taxon>Sophophora</taxon>
    </lineage>
</organism>